<reference key="1">
    <citation type="journal article" date="2006" name="Syst. Appl. Microbiol.">
        <title>Molecular characterization of the alpha-glucosidase activity in Enterobacter sakazakii reveals the presence of a putative gene cluster for palatinose metabolism.</title>
        <authorList>
            <person name="Lehner A."/>
            <person name="Riedel K."/>
            <person name="Rattei T."/>
            <person name="Ruepp A."/>
            <person name="Frishman D."/>
            <person name="Breeuwer P."/>
            <person name="Diep B."/>
            <person name="Eberl L."/>
            <person name="Stephan R."/>
        </authorList>
    </citation>
    <scope>NUCLEOTIDE SEQUENCE [GENOMIC DNA]</scope>
    <source>
        <strain>858</strain>
    </source>
</reference>
<comment type="function">
    <text evidence="1">Catalyzes the dehydration of methylthioribulose-1-phosphate (MTRu-1-P) into 2,3-diketo-5-methylthiopentyl-1-phosphate (DK-MTP-1-P).</text>
</comment>
<comment type="catalytic activity">
    <reaction evidence="1">
        <text>5-(methylsulfanyl)-D-ribulose 1-phosphate = 5-methylsulfanyl-2,3-dioxopentyl phosphate + H2O</text>
        <dbReference type="Rhea" id="RHEA:15549"/>
        <dbReference type="ChEBI" id="CHEBI:15377"/>
        <dbReference type="ChEBI" id="CHEBI:58548"/>
        <dbReference type="ChEBI" id="CHEBI:58828"/>
        <dbReference type="EC" id="4.2.1.109"/>
    </reaction>
</comment>
<comment type="cofactor">
    <cofactor evidence="1">
        <name>Zn(2+)</name>
        <dbReference type="ChEBI" id="CHEBI:29105"/>
    </cofactor>
    <text evidence="1">Binds 1 zinc ion per subunit.</text>
</comment>
<comment type="pathway">
    <text evidence="1">Amino-acid biosynthesis; L-methionine biosynthesis via salvage pathway; L-methionine from S-methyl-5-thio-alpha-D-ribose 1-phosphate: step 2/6.</text>
</comment>
<comment type="similarity">
    <text evidence="1">Belongs to the aldolase class II family. MtnB subfamily.</text>
</comment>
<organism>
    <name type="scientific">Cronobacter sakazakii</name>
    <name type="common">Enterobacter sakazakii</name>
    <dbReference type="NCBI Taxonomy" id="28141"/>
    <lineage>
        <taxon>Bacteria</taxon>
        <taxon>Pseudomonadati</taxon>
        <taxon>Pseudomonadota</taxon>
        <taxon>Gammaproteobacteria</taxon>
        <taxon>Enterobacterales</taxon>
        <taxon>Enterobacteriaceae</taxon>
        <taxon>Cronobacter</taxon>
    </lineage>
</organism>
<gene>
    <name evidence="1" type="primary">mtnB</name>
</gene>
<sequence>MAACHWIGAKGWAPATGGNMSLREDARWCWLSESGKDKGSLTTDDFLQVEIATNLAPSGRKPSAETGLHTLIYRLFPEANCVLHVHTVNATVLSRVEKSDALHLSGYEMQKSLAGQITHLDDVPVAIFDNDQDIDALAERIARHHRQFPLRYGFLLRGHGLTCWGSDVAVARRHLEGLEFLFECEMQRRLLERA</sequence>
<keyword id="KW-0028">Amino-acid biosynthesis</keyword>
<keyword id="KW-0456">Lyase</keyword>
<keyword id="KW-0479">Metal-binding</keyword>
<keyword id="KW-0486">Methionine biosynthesis</keyword>
<keyword id="KW-0862">Zinc</keyword>
<proteinExistence type="inferred from homology"/>
<evidence type="ECO:0000255" key="1">
    <source>
        <dbReference type="HAMAP-Rule" id="MF_01677"/>
    </source>
</evidence>
<protein>
    <recommendedName>
        <fullName evidence="1">Methylthioribulose-1-phosphate dehydratase</fullName>
        <shortName evidence="1">MTRu-1-P dehydratase</shortName>
        <ecNumber evidence="1">4.2.1.109</ecNumber>
    </recommendedName>
</protein>
<dbReference type="EC" id="4.2.1.109" evidence="1"/>
<dbReference type="EMBL" id="AM075208">
    <property type="protein sequence ID" value="CAJ27336.1"/>
    <property type="molecule type" value="Genomic_DNA"/>
</dbReference>
<dbReference type="SMR" id="Q3ZUZ8"/>
<dbReference type="STRING" id="28141.CSK29544_04011"/>
<dbReference type="UniPathway" id="UPA00904">
    <property type="reaction ID" value="UER00875"/>
</dbReference>
<dbReference type="GO" id="GO:0005829">
    <property type="term" value="C:cytosol"/>
    <property type="evidence" value="ECO:0007669"/>
    <property type="project" value="TreeGrafter"/>
</dbReference>
<dbReference type="GO" id="GO:0016832">
    <property type="term" value="F:aldehyde-lyase activity"/>
    <property type="evidence" value="ECO:0007669"/>
    <property type="project" value="TreeGrafter"/>
</dbReference>
<dbReference type="GO" id="GO:0046570">
    <property type="term" value="F:methylthioribulose 1-phosphate dehydratase activity"/>
    <property type="evidence" value="ECO:0007669"/>
    <property type="project" value="UniProtKB-UniRule"/>
</dbReference>
<dbReference type="GO" id="GO:0008270">
    <property type="term" value="F:zinc ion binding"/>
    <property type="evidence" value="ECO:0007669"/>
    <property type="project" value="UniProtKB-UniRule"/>
</dbReference>
<dbReference type="GO" id="GO:0019509">
    <property type="term" value="P:L-methionine salvage from methylthioadenosine"/>
    <property type="evidence" value="ECO:0007669"/>
    <property type="project" value="UniProtKB-UniRule"/>
</dbReference>
<dbReference type="GO" id="GO:0019323">
    <property type="term" value="P:pentose catabolic process"/>
    <property type="evidence" value="ECO:0007669"/>
    <property type="project" value="TreeGrafter"/>
</dbReference>
<dbReference type="Gene3D" id="3.40.225.10">
    <property type="entry name" value="Class II aldolase/adducin N-terminal domain"/>
    <property type="match status" value="1"/>
</dbReference>
<dbReference type="HAMAP" id="MF_01677">
    <property type="entry name" value="Salvage_MtnB"/>
    <property type="match status" value="1"/>
</dbReference>
<dbReference type="InterPro" id="IPR050197">
    <property type="entry name" value="Aldolase_class_II_sugar_metab"/>
</dbReference>
<dbReference type="InterPro" id="IPR001303">
    <property type="entry name" value="Aldolase_II/adducin_N"/>
</dbReference>
<dbReference type="InterPro" id="IPR036409">
    <property type="entry name" value="Aldolase_II/adducin_N_sf"/>
</dbReference>
<dbReference type="InterPro" id="IPR017714">
    <property type="entry name" value="MethylthioRu-1-P_deHdtase_MtnB"/>
</dbReference>
<dbReference type="NCBIfam" id="NF006672">
    <property type="entry name" value="PRK09220.1"/>
    <property type="match status" value="1"/>
</dbReference>
<dbReference type="NCBIfam" id="TIGR03328">
    <property type="entry name" value="salvage_mtnB"/>
    <property type="match status" value="1"/>
</dbReference>
<dbReference type="PANTHER" id="PTHR22789:SF0">
    <property type="entry name" value="3-OXO-TETRONATE 4-PHOSPHATE DECARBOXYLASE-RELATED"/>
    <property type="match status" value="1"/>
</dbReference>
<dbReference type="PANTHER" id="PTHR22789">
    <property type="entry name" value="FUCULOSE PHOSPHATE ALDOLASE"/>
    <property type="match status" value="1"/>
</dbReference>
<dbReference type="Pfam" id="PF00596">
    <property type="entry name" value="Aldolase_II"/>
    <property type="match status" value="1"/>
</dbReference>
<dbReference type="SMART" id="SM01007">
    <property type="entry name" value="Aldolase_II"/>
    <property type="match status" value="1"/>
</dbReference>
<dbReference type="SUPFAM" id="SSF53639">
    <property type="entry name" value="AraD/HMP-PK domain-like"/>
    <property type="match status" value="1"/>
</dbReference>
<feature type="chain" id="PRO_0000357074" description="Methylthioribulose-1-phosphate dehydratase">
    <location>
        <begin position="1"/>
        <end position="194"/>
    </location>
</feature>
<feature type="binding site" evidence="1">
    <location>
        <position position="84"/>
    </location>
    <ligand>
        <name>Zn(2+)</name>
        <dbReference type="ChEBI" id="CHEBI:29105"/>
    </ligand>
</feature>
<feature type="binding site" evidence="1">
    <location>
        <position position="86"/>
    </location>
    <ligand>
        <name>Zn(2+)</name>
        <dbReference type="ChEBI" id="CHEBI:29105"/>
    </ligand>
</feature>
<name>MTNB_CROSK</name>
<accession>Q3ZUZ8</accession>